<accession>Q8I6Z7</accession>
<gene>
    <name evidence="9" type="primary">PDEbeta</name>
    <name evidence="9" type="synonym">PDE2</name>
    <name evidence="13" type="ORF">PF3D7_1321500.1</name>
</gene>
<sequence length="1139" mass="133168">MGKVEDFEEHNKNSNQDIEKNVGNRRRSNSNTINDQNENINKNKAIVTKKSFIMNLLRNKEKTKVEQNDDNIVENMNERKNSLKDMSLISDNVEKDNKVKKKNSYLKNLNILGKTKSIEFSFPSNILNNARKNIQEIDEESPLTSNSLRTYKEGISEDNRQNQRNADNNSLNWSTSNINTECNSEFSNIEVKVLKTEKSNSVKLKDNIIDIPNDKNKKELQEINIKNTNKDSYKNLYLKVRNSISFNDNIKIDDENKNDKNNIIDNYNNYDDINSSNEITIDGLNHDDNIKKIDNINNFDNKHDDNLQDHHQNHVHHTFRSSRKSLGNIKSNNTNIKLNNDKNFDTNINKRSILEKYFYDIWKRNITIKKEIYSLSSKNPPNPLKSTFADACQNESSEKELLKKIPLKFNDDSIESLYVLNLNNWISSRMIIIGIVMLILSFIIWPLTTWSLKTSTWGRETYIIILFHTLMAINTLILIFFIIIGSTELCKYSECMSYVLFSLMVALWGLWNIAIGLTLEYNPNLSEMPTTTYELEMIYVLTYIYGFLPLVIIDIFFPSRTKYNWIIHLIFIFLNSSSIILVGSAKPDFVPEIYVVFRILAYTTLCIFLYIGSYTSELQIRYVFYNLLVAGYKLDKIESDMKNKTSNKKISTGIEDLINMLKECTKVILELENETDTNFNVHTKTSYCSNILEQCLSTLTKSDNLYNIDYNVLENPENKKFIEAYVSKSKSNFAGEEVPKGVDFKLNKSFSNNDCISTDKVDLDKKQIKKFLKQINISQLTKMIQFIDNKLLSDWDFNCLTYFDESEYPFFDINLSLICTIDHNIPINIIINFLCFVEKQYNNVPYHNTIHATMVTQKFFCLAKKLGIYDDLEYKIKLVMFISGICHDIGHPGYNNLFFVNSLHPLSIIYNDISVLENYHASITFKILQLNQCNILKNFSEKDFRMMRSYIIELILSTDMKHHFEIISKFRIRRENEDFDYIKNSDDLLILTKMIIKSADISHGSVSWSEHYCWCQRVLSEFYTQGDEELKNKMPLSPLCDRTKHNEVCKSQITFLKFVVMPLFEELSHIDNNKFIKSFCLKRLNSNCIMWDTLMKEEKTIEVYDPAAVKLKDKKKKKVDKKKKSYIDLTLFFIKNVSD</sequence>
<name>PDEB_PLAF7</name>
<comment type="function">
    <text evidence="8">Plays a role in signal transduction by regulating the intracellular concentration of cyclic nucleotides cAMP and cGMP (PubMed:30794532). Catalyzes the hydrolysis of both cAMP and cGMP to 5'-AMP and 5'-GMP, respectively (PubMed:30794532). By regulating cAMP levels during the asexual blood stage and, thus PKA activation, required for merozoite invasion of erythrocytes and for the parasite development immediately following invasion (PubMed:30794532).</text>
</comment>
<comment type="catalytic activity">
    <reaction evidence="8">
        <text>3',5'-cyclic GMP + H2O = GMP + H(+)</text>
        <dbReference type="Rhea" id="RHEA:16957"/>
        <dbReference type="ChEBI" id="CHEBI:15377"/>
        <dbReference type="ChEBI" id="CHEBI:15378"/>
        <dbReference type="ChEBI" id="CHEBI:57746"/>
        <dbReference type="ChEBI" id="CHEBI:58115"/>
        <dbReference type="EC" id="3.1.4.35"/>
    </reaction>
</comment>
<comment type="catalytic activity">
    <reaction evidence="8">
        <text>3',5'-cyclic AMP + H2O = AMP + H(+)</text>
        <dbReference type="Rhea" id="RHEA:25277"/>
        <dbReference type="ChEBI" id="CHEBI:15377"/>
        <dbReference type="ChEBI" id="CHEBI:15378"/>
        <dbReference type="ChEBI" id="CHEBI:58165"/>
        <dbReference type="ChEBI" id="CHEBI:456215"/>
        <dbReference type="EC" id="3.1.4.53"/>
    </reaction>
</comment>
<comment type="cofactor">
    <cofactor evidence="5">
        <name>a divalent metal cation</name>
        <dbReference type="ChEBI" id="CHEBI:60240"/>
    </cofactor>
    <text evidence="5">Binds 2 divalent metal cations per subunit. Site 1 may preferentially bind zinc ions, while site 2 has a preference for magnesium and/or manganese ions.</text>
</comment>
<comment type="pathway">
    <text evidence="8">Purine metabolism; 3',5'-cyclic GMP degradation; GMP from 3',5'-cyclic GMP: step 1/1.</text>
</comment>
<comment type="pathway">
    <text evidence="8">Purine metabolism; 3',5'-cyclic AMP degradation; AMP from 3',5'-cyclic AMP: step 1/1.</text>
</comment>
<comment type="subcellular location">
    <subcellularLocation>
        <location evidence="8 11">Cell membrane</location>
        <topology evidence="1">Multi-pass membrane protein</topology>
    </subcellularLocation>
    <subcellularLocation>
        <location evidence="8">Endoplasmic reticulum membrane</location>
        <topology evidence="1">Multi-pass membrane protein</topology>
    </subcellularLocation>
    <text evidence="8">In early schizonts, localizes to the endoplasmic reticulum (PubMed:30794532). Transported to an apical location and then subsequently discharged to the plasma membrane of merozoites within mature schizont (PubMed:30794532).</text>
</comment>
<comment type="developmental stage">
    <text evidence="7 8">Expressed during the asexual blood stage, with highest levels in the late schizont stage.</text>
</comment>
<comment type="similarity">
    <text evidence="5">Belongs to the cyclic nucleotide phosphodiesterase family.</text>
</comment>
<dbReference type="EC" id="3.1.4.35" evidence="8"/>
<dbReference type="EC" id="3.1.4.53" evidence="8"/>
<dbReference type="EMBL" id="EF673786">
    <property type="protein sequence ID" value="ABS50258.1"/>
    <property type="molecule type" value="mRNA"/>
</dbReference>
<dbReference type="EMBL" id="AL844509">
    <property type="protein sequence ID" value="CAD52362.1"/>
    <property type="molecule type" value="Genomic_DNA"/>
</dbReference>
<dbReference type="RefSeq" id="XP_001349954.1">
    <property type="nucleotide sequence ID" value="XM_001349918.1"/>
</dbReference>
<dbReference type="SMR" id="Q8I6Z7"/>
<dbReference type="FunCoup" id="Q8I6Z7">
    <property type="interactions" value="30"/>
</dbReference>
<dbReference type="STRING" id="36329.Q8I6Z7"/>
<dbReference type="GlyCosmos" id="Q8I6Z7">
    <property type="glycosylation" value="1 site, No reported glycans"/>
</dbReference>
<dbReference type="PaxDb" id="5833-MAL13P1.118"/>
<dbReference type="EnsemblProtists" id="CAD52362">
    <property type="protein sequence ID" value="CAD52362"/>
    <property type="gene ID" value="PF3D7_1321500.1"/>
</dbReference>
<dbReference type="GeneID" id="813666"/>
<dbReference type="KEGG" id="pfa:PF3D7_1321500.1"/>
<dbReference type="VEuPathDB" id="PlasmoDB:PF3D7_1321500"/>
<dbReference type="HOGENOM" id="CLU_278061_0_0_1"/>
<dbReference type="InParanoid" id="Q8I6Z7"/>
<dbReference type="OMA" id="HVTNMIQ"/>
<dbReference type="OrthoDB" id="189220at2759"/>
<dbReference type="PhylomeDB" id="Q8I6Z7"/>
<dbReference type="Reactome" id="R-PFA-111957">
    <property type="pathway name" value="Cam-PDE 1 activation"/>
</dbReference>
<dbReference type="Reactome" id="R-PFA-165160">
    <property type="pathway name" value="PDE3B signalling"/>
</dbReference>
<dbReference type="Reactome" id="R-PFA-180024">
    <property type="pathway name" value="DARPP-32 events"/>
</dbReference>
<dbReference type="Reactome" id="R-PFA-418457">
    <property type="pathway name" value="cGMP effects"/>
</dbReference>
<dbReference type="Reactome" id="R-PFA-418555">
    <property type="pathway name" value="G alpha (s) signalling events"/>
</dbReference>
<dbReference type="UniPathway" id="UPA00762">
    <property type="reaction ID" value="UER00747"/>
</dbReference>
<dbReference type="UniPathway" id="UPA00763">
    <property type="reaction ID" value="UER00748"/>
</dbReference>
<dbReference type="Proteomes" id="UP000001450">
    <property type="component" value="Chromosome 13"/>
</dbReference>
<dbReference type="GO" id="GO:0005789">
    <property type="term" value="C:endoplasmic reticulum membrane"/>
    <property type="evidence" value="ECO:0000314"/>
    <property type="project" value="UniProtKB"/>
</dbReference>
<dbReference type="GO" id="GO:0005886">
    <property type="term" value="C:plasma membrane"/>
    <property type="evidence" value="ECO:0000314"/>
    <property type="project" value="UniProtKB"/>
</dbReference>
<dbReference type="GO" id="GO:0004115">
    <property type="term" value="F:3',5'-cyclic-AMP phosphodiesterase activity"/>
    <property type="evidence" value="ECO:0000314"/>
    <property type="project" value="UniProtKB"/>
</dbReference>
<dbReference type="GO" id="GO:0047555">
    <property type="term" value="F:3',5'-cyclic-GMP phosphodiesterase activity"/>
    <property type="evidence" value="ECO:0000314"/>
    <property type="project" value="UniProtKB"/>
</dbReference>
<dbReference type="GO" id="GO:0004117">
    <property type="term" value="F:calmodulin-activated dual specificity 3',5'-cyclic-GMP, 3',5'-cyclic-AMP phosphodiesterase activity"/>
    <property type="evidence" value="ECO:0000250"/>
    <property type="project" value="GeneDB"/>
</dbReference>
<dbReference type="GO" id="GO:0046872">
    <property type="term" value="F:metal ion binding"/>
    <property type="evidence" value="ECO:0007669"/>
    <property type="project" value="UniProtKB-KW"/>
</dbReference>
<dbReference type="GO" id="GO:0006198">
    <property type="term" value="P:cAMP catabolic process"/>
    <property type="evidence" value="ECO:0007669"/>
    <property type="project" value="UniProtKB-UniPathway"/>
</dbReference>
<dbReference type="GO" id="GO:0019933">
    <property type="term" value="P:cAMP-mediated signaling"/>
    <property type="evidence" value="ECO:0000318"/>
    <property type="project" value="GO_Central"/>
</dbReference>
<dbReference type="GO" id="GO:0046069">
    <property type="term" value="P:cGMP catabolic process"/>
    <property type="evidence" value="ECO:0000314"/>
    <property type="project" value="UniProtKB"/>
</dbReference>
<dbReference type="GO" id="GO:0043951">
    <property type="term" value="P:negative regulation of cAMP-mediated signaling"/>
    <property type="evidence" value="ECO:0000314"/>
    <property type="project" value="UniProtKB"/>
</dbReference>
<dbReference type="GO" id="GO:0007165">
    <property type="term" value="P:signal transduction"/>
    <property type="evidence" value="ECO:0000250"/>
    <property type="project" value="GeneDB"/>
</dbReference>
<dbReference type="CDD" id="cd00077">
    <property type="entry name" value="HDc"/>
    <property type="match status" value="1"/>
</dbReference>
<dbReference type="FunFam" id="1.10.1300.10:FF:000017">
    <property type="entry name" value="Phosphodiesterase"/>
    <property type="match status" value="1"/>
</dbReference>
<dbReference type="Gene3D" id="1.10.1300.10">
    <property type="entry name" value="3'5'-cyclic nucleotide phosphodiesterase, catalytic domain"/>
    <property type="match status" value="1"/>
</dbReference>
<dbReference type="InterPro" id="IPR003607">
    <property type="entry name" value="HD/PDEase_dom"/>
</dbReference>
<dbReference type="InterPro" id="IPR023088">
    <property type="entry name" value="PDEase"/>
</dbReference>
<dbReference type="InterPro" id="IPR002073">
    <property type="entry name" value="PDEase_catalytic_dom"/>
</dbReference>
<dbReference type="InterPro" id="IPR036971">
    <property type="entry name" value="PDEase_catalytic_dom_sf"/>
</dbReference>
<dbReference type="InterPro" id="IPR023174">
    <property type="entry name" value="PDEase_CS"/>
</dbReference>
<dbReference type="PANTHER" id="PTHR11347">
    <property type="entry name" value="CYCLIC NUCLEOTIDE PHOSPHODIESTERASE"/>
    <property type="match status" value="1"/>
</dbReference>
<dbReference type="Pfam" id="PF00233">
    <property type="entry name" value="PDEase_I"/>
    <property type="match status" value="1"/>
</dbReference>
<dbReference type="PRINTS" id="PR00387">
    <property type="entry name" value="PDIESTERASE1"/>
</dbReference>
<dbReference type="SMART" id="SM00471">
    <property type="entry name" value="HDc"/>
    <property type="match status" value="1"/>
</dbReference>
<dbReference type="SUPFAM" id="SSF109604">
    <property type="entry name" value="HD-domain/PDEase-like"/>
    <property type="match status" value="1"/>
</dbReference>
<dbReference type="PROSITE" id="PS00126">
    <property type="entry name" value="PDEASE_I_1"/>
    <property type="match status" value="1"/>
</dbReference>
<dbReference type="PROSITE" id="PS51845">
    <property type="entry name" value="PDEASE_I_2"/>
    <property type="match status" value="1"/>
</dbReference>
<proteinExistence type="evidence at protein level"/>
<evidence type="ECO:0000255" key="1"/>
<evidence type="ECO:0000255" key="2">
    <source>
        <dbReference type="PIRSR" id="PIRSR623088-2"/>
    </source>
</evidence>
<evidence type="ECO:0000255" key="3">
    <source>
        <dbReference type="PROSITE-ProRule" id="PRU00498"/>
    </source>
</evidence>
<evidence type="ECO:0000255" key="4">
    <source>
        <dbReference type="PROSITE-ProRule" id="PRU01192"/>
    </source>
</evidence>
<evidence type="ECO:0000255" key="5">
    <source>
        <dbReference type="RuleBase" id="RU363067"/>
    </source>
</evidence>
<evidence type="ECO:0000256" key="6">
    <source>
        <dbReference type="SAM" id="MobiDB-lite"/>
    </source>
</evidence>
<evidence type="ECO:0000269" key="7">
    <source>
    </source>
</evidence>
<evidence type="ECO:0000269" key="8">
    <source>
    </source>
</evidence>
<evidence type="ECO:0000303" key="9">
    <source>
    </source>
</evidence>
<evidence type="ECO:0000305" key="10"/>
<evidence type="ECO:0000305" key="11">
    <source>
    </source>
</evidence>
<evidence type="ECO:0000312" key="12">
    <source>
        <dbReference type="EMBL" id="ABS50258.1"/>
    </source>
</evidence>
<evidence type="ECO:0000312" key="13">
    <source>
        <dbReference type="EMBL" id="CAD52362.1"/>
    </source>
</evidence>
<evidence type="ECO:0000312" key="14">
    <source>
        <dbReference type="Proteomes" id="UP000001450"/>
    </source>
</evidence>
<reference evidence="12" key="1">
    <citation type="journal article" date="2008" name="Int. J. Parasitol.">
        <title>Cyclic nucleotide-specific phosphodiesterases of Plasmodium falciparum: PfPDEalpha, a non-essential cGMP-specific PDE that is an integral membrane protein.</title>
        <authorList>
            <person name="Wentzinger L."/>
            <person name="Bopp S."/>
            <person name="Tenor H."/>
            <person name="Klar J."/>
            <person name="Brun R."/>
            <person name="Beck H.P."/>
            <person name="Seebeck T."/>
        </authorList>
    </citation>
    <scope>NUCLEOTIDE SEQUENCE [MRNA]</scope>
    <scope>SUBCELLULAR LOCATION</scope>
    <scope>DEVELOPMENTAL STAGE</scope>
    <source>
        <strain evidence="12">3D7</strain>
    </source>
</reference>
<reference evidence="14" key="2">
    <citation type="journal article" date="2002" name="Nature">
        <title>Genome sequence of the human malaria parasite Plasmodium falciparum.</title>
        <authorList>
            <person name="Gardner M.J."/>
            <person name="Hall N."/>
            <person name="Fung E."/>
            <person name="White O."/>
            <person name="Berriman M."/>
            <person name="Hyman R.W."/>
            <person name="Carlton J.M."/>
            <person name="Pain A."/>
            <person name="Nelson K.E."/>
            <person name="Bowman S."/>
            <person name="Paulsen I.T."/>
            <person name="James K.D."/>
            <person name="Eisen J.A."/>
            <person name="Rutherford K.M."/>
            <person name="Salzberg S.L."/>
            <person name="Craig A."/>
            <person name="Kyes S."/>
            <person name="Chan M.-S."/>
            <person name="Nene V."/>
            <person name="Shallom S.J."/>
            <person name="Suh B."/>
            <person name="Peterson J."/>
            <person name="Angiuoli S."/>
            <person name="Pertea M."/>
            <person name="Allen J."/>
            <person name="Selengut J."/>
            <person name="Haft D."/>
            <person name="Mather M.W."/>
            <person name="Vaidya A.B."/>
            <person name="Martin D.M.A."/>
            <person name="Fairlamb A.H."/>
            <person name="Fraunholz M.J."/>
            <person name="Roos D.S."/>
            <person name="Ralph S.A."/>
            <person name="McFadden G.I."/>
            <person name="Cummings L.M."/>
            <person name="Subramanian G.M."/>
            <person name="Mungall C."/>
            <person name="Venter J.C."/>
            <person name="Carucci D.J."/>
            <person name="Hoffman S.L."/>
            <person name="Newbold C."/>
            <person name="Davis R.W."/>
            <person name="Fraser C.M."/>
            <person name="Barrell B.G."/>
        </authorList>
    </citation>
    <scope>NUCLEOTIDE SEQUENCE [LARGE SCALE GENOMIC DNA]</scope>
    <source>
        <strain evidence="14">3D7</strain>
    </source>
</reference>
<reference evidence="14" key="3">
    <citation type="journal article" date="2002" name="Nature">
        <title>Sequence of Plasmodium falciparum chromosomes 1, 3-9 and 13.</title>
        <authorList>
            <person name="Hall N."/>
            <person name="Pain A."/>
            <person name="Berriman M."/>
            <person name="Churcher C.M."/>
            <person name="Harris B."/>
            <person name="Harris D."/>
            <person name="Mungall K.L."/>
            <person name="Bowman S."/>
            <person name="Atkin R."/>
            <person name="Baker S."/>
            <person name="Barron A."/>
            <person name="Brooks K."/>
            <person name="Buckee C.O."/>
            <person name="Burrows C."/>
            <person name="Cherevach I."/>
            <person name="Chillingworth C."/>
            <person name="Chillingworth T."/>
            <person name="Christodoulou Z."/>
            <person name="Clark L."/>
            <person name="Clark R."/>
            <person name="Corton C."/>
            <person name="Cronin A."/>
            <person name="Davies R.M."/>
            <person name="Davis P."/>
            <person name="Dear P."/>
            <person name="Dearden F."/>
            <person name="Doggett J."/>
            <person name="Feltwell T."/>
            <person name="Goble A."/>
            <person name="Goodhead I."/>
            <person name="Gwilliam R."/>
            <person name="Hamlin N."/>
            <person name="Hance Z."/>
            <person name="Harper D."/>
            <person name="Hauser H."/>
            <person name="Hornsby T."/>
            <person name="Holroyd S."/>
            <person name="Horrocks P."/>
            <person name="Humphray S."/>
            <person name="Jagels K."/>
            <person name="James K.D."/>
            <person name="Johnson D."/>
            <person name="Kerhornou A."/>
            <person name="Knights A."/>
            <person name="Konfortov B."/>
            <person name="Kyes S."/>
            <person name="Larke N."/>
            <person name="Lawson D."/>
            <person name="Lennard N."/>
            <person name="Line A."/>
            <person name="Maddison M."/>
            <person name="Mclean J."/>
            <person name="Mooney P."/>
            <person name="Moule S."/>
            <person name="Murphy L."/>
            <person name="Oliver K."/>
            <person name="Ormond D."/>
            <person name="Price C."/>
            <person name="Quail M.A."/>
            <person name="Rabbinowitsch E."/>
            <person name="Rajandream M.A."/>
            <person name="Rutter S."/>
            <person name="Rutherford K.M."/>
            <person name="Sanders M."/>
            <person name="Simmonds M."/>
            <person name="Seeger K."/>
            <person name="Sharp S."/>
            <person name="Smith R."/>
            <person name="Squares R."/>
            <person name="Squares S."/>
            <person name="Stevens K."/>
            <person name="Taylor K."/>
            <person name="Tivey A."/>
            <person name="Unwin L."/>
            <person name="Whitehead S."/>
            <person name="Woodward J.R."/>
            <person name="Sulston J.E."/>
            <person name="Craig A."/>
            <person name="Newbold C."/>
            <person name="Barrell B.G."/>
        </authorList>
    </citation>
    <scope>NUCLEOTIDE SEQUENCE [LARGE SCALE GENOMIC DNA]</scope>
    <source>
        <strain evidence="14">3D7</strain>
    </source>
</reference>
<reference evidence="10" key="4">
    <citation type="journal article" date="2019" name="PLoS Biol.">
        <title>Phosphodiesterase beta is the master regulator of cAMP signalling during malaria parasite invasion.</title>
        <authorList>
            <person name="Flueck C."/>
            <person name="Drought L.G."/>
            <person name="Jones A."/>
            <person name="Patel A."/>
            <person name="Perrin A.J."/>
            <person name="Walker E.M."/>
            <person name="Nofal S.D."/>
            <person name="Snijders A.P."/>
            <person name="Blackman M.J."/>
            <person name="Baker D.A."/>
        </authorList>
    </citation>
    <scope>FUNCTION</scope>
    <scope>CATALYTIC ACTIVITY</scope>
    <scope>PATHWAY</scope>
    <scope>SUBCELLULAR LOCATION</scope>
    <scope>DEVELOPMENTAL STAGE</scope>
</reference>
<feature type="chain" id="PRO_0000452648" description="Dual 3',5'-cyclic-AMP and -GMP phosphodiesterase beta">
    <location>
        <begin position="1"/>
        <end position="1139"/>
    </location>
</feature>
<feature type="topological domain" description="Cytoplasmic" evidence="10">
    <location>
        <begin position="1"/>
        <end position="429"/>
    </location>
</feature>
<feature type="transmembrane region" description="Helical" evidence="1">
    <location>
        <begin position="430"/>
        <end position="450"/>
    </location>
</feature>
<feature type="topological domain" description="Extracellular" evidence="10">
    <location>
        <begin position="451"/>
        <end position="462"/>
    </location>
</feature>
<feature type="transmembrane region" description="Helical" evidence="1">
    <location>
        <begin position="463"/>
        <end position="483"/>
    </location>
</feature>
<feature type="topological domain" description="Cytoplasmic" evidence="10">
    <location>
        <begin position="484"/>
        <end position="498"/>
    </location>
</feature>
<feature type="transmembrane region" description="Helical" evidence="1">
    <location>
        <begin position="499"/>
        <end position="519"/>
    </location>
</feature>
<feature type="topological domain" description="Extracellular" evidence="10">
    <location>
        <begin position="520"/>
        <end position="536"/>
    </location>
</feature>
<feature type="transmembrane region" description="Helical" evidence="1">
    <location>
        <begin position="537"/>
        <end position="557"/>
    </location>
</feature>
<feature type="topological domain" description="Cytoplasmic" evidence="10">
    <location>
        <begin position="558"/>
        <end position="564"/>
    </location>
</feature>
<feature type="transmembrane region" description="Helical" evidence="1">
    <location>
        <begin position="565"/>
        <end position="585"/>
    </location>
</feature>
<feature type="topological domain" description="Extracellular" evidence="10">
    <location>
        <begin position="586"/>
        <end position="592"/>
    </location>
</feature>
<feature type="transmembrane region" description="Helical" evidence="1">
    <location>
        <begin position="593"/>
        <end position="613"/>
    </location>
</feature>
<feature type="topological domain" description="Cytoplasmic" evidence="10">
    <location>
        <begin position="614"/>
        <end position="1139"/>
    </location>
</feature>
<feature type="domain" description="PDEase" evidence="4">
    <location>
        <begin position="775"/>
        <end position="1098"/>
    </location>
</feature>
<feature type="region of interest" description="Disordered" evidence="6">
    <location>
        <begin position="1"/>
        <end position="42"/>
    </location>
</feature>
<feature type="region of interest" description="Disordered" evidence="6">
    <location>
        <begin position="154"/>
        <end position="177"/>
    </location>
</feature>
<feature type="compositionally biased region" description="Basic and acidic residues" evidence="6">
    <location>
        <begin position="9"/>
        <end position="22"/>
    </location>
</feature>
<feature type="compositionally biased region" description="Polar residues" evidence="6">
    <location>
        <begin position="29"/>
        <end position="42"/>
    </location>
</feature>
<feature type="active site" description="Proton donor" evidence="4">
    <location>
        <position position="847"/>
    </location>
</feature>
<feature type="binding site" evidence="2">
    <location>
        <begin position="847"/>
        <end position="851"/>
    </location>
    <ligand>
        <name>a nucleoside 3',5'-cyclic phosphate</name>
        <dbReference type="ChEBI" id="CHEBI:58464"/>
    </ligand>
</feature>
<feature type="binding site" evidence="4">
    <location>
        <position position="851"/>
    </location>
    <ligand>
        <name>a divalent metal cation</name>
        <dbReference type="ChEBI" id="CHEBI:60240"/>
        <label>1</label>
    </ligand>
</feature>
<feature type="binding site" evidence="4">
    <location>
        <position position="887"/>
    </location>
    <ligand>
        <name>a divalent metal cation</name>
        <dbReference type="ChEBI" id="CHEBI:60240"/>
        <label>1</label>
    </ligand>
</feature>
<feature type="binding site" evidence="4">
    <location>
        <position position="888"/>
    </location>
    <ligand>
        <name>a divalent metal cation</name>
        <dbReference type="ChEBI" id="CHEBI:60240"/>
        <label>1</label>
    </ligand>
</feature>
<feature type="binding site" evidence="4">
    <location>
        <position position="888"/>
    </location>
    <ligand>
        <name>a divalent metal cation</name>
        <dbReference type="ChEBI" id="CHEBI:60240"/>
        <label>2</label>
    </ligand>
</feature>
<feature type="binding site" evidence="2">
    <location>
        <position position="888"/>
    </location>
    <ligand>
        <name>a nucleoside 3',5'-cyclic phosphate</name>
        <dbReference type="ChEBI" id="CHEBI:58464"/>
    </ligand>
</feature>
<feature type="binding site" evidence="4">
    <location>
        <position position="1000"/>
    </location>
    <ligand>
        <name>a divalent metal cation</name>
        <dbReference type="ChEBI" id="CHEBI:60240"/>
        <label>1</label>
    </ligand>
</feature>
<feature type="binding site" evidence="2">
    <location>
        <position position="1000"/>
    </location>
    <ligand>
        <name>a nucleoside 3',5'-cyclic phosphate</name>
        <dbReference type="ChEBI" id="CHEBI:58464"/>
    </ligand>
</feature>
<feature type="binding site" evidence="2">
    <location>
        <position position="1052"/>
    </location>
    <ligand>
        <name>a nucleoside 3',5'-cyclic phosphate</name>
        <dbReference type="ChEBI" id="CHEBI:58464"/>
    </ligand>
</feature>
<feature type="glycosylation site" description="N-linked (GlcNAc...) asparagine" evidence="3">
    <location>
        <position position="524"/>
    </location>
</feature>
<keyword id="KW-0114">cAMP</keyword>
<keyword id="KW-1003">Cell membrane</keyword>
<keyword id="KW-0140">cGMP</keyword>
<keyword id="KW-0256">Endoplasmic reticulum</keyword>
<keyword id="KW-0325">Glycoprotein</keyword>
<keyword id="KW-0378">Hydrolase</keyword>
<keyword id="KW-0472">Membrane</keyword>
<keyword id="KW-0479">Metal-binding</keyword>
<keyword id="KW-1185">Reference proteome</keyword>
<keyword id="KW-0812">Transmembrane</keyword>
<keyword id="KW-1133">Transmembrane helix</keyword>
<protein>
    <recommendedName>
        <fullName evidence="10">Dual 3',5'-cyclic-AMP and -GMP phosphodiesterase beta</fullName>
        <ecNumber evidence="8">3.1.4.35</ecNumber>
        <ecNumber evidence="8">3.1.4.53</ecNumber>
    </recommendedName>
</protein>
<organism evidence="14">
    <name type="scientific">Plasmodium falciparum (isolate 3D7)</name>
    <dbReference type="NCBI Taxonomy" id="36329"/>
    <lineage>
        <taxon>Eukaryota</taxon>
        <taxon>Sar</taxon>
        <taxon>Alveolata</taxon>
        <taxon>Apicomplexa</taxon>
        <taxon>Aconoidasida</taxon>
        <taxon>Haemosporida</taxon>
        <taxon>Plasmodiidae</taxon>
        <taxon>Plasmodium</taxon>
        <taxon>Plasmodium (Laverania)</taxon>
    </lineage>
</organism>